<dbReference type="EC" id="2.4.1.182"/>
<dbReference type="EMBL" id="AC006951">
    <property type="protein sequence ID" value="AAD25824.1"/>
    <property type="status" value="ALT_SEQ"/>
    <property type="molecule type" value="Genomic_DNA"/>
</dbReference>
<dbReference type="EMBL" id="CP002685">
    <property type="protein sequence ID" value="AEC05847.1"/>
    <property type="molecule type" value="Genomic_DNA"/>
</dbReference>
<dbReference type="EMBL" id="BT022116">
    <property type="protein sequence ID" value="AAY34177.1"/>
    <property type="status" value="ALT_FRAME"/>
    <property type="molecule type" value="mRNA"/>
</dbReference>
<dbReference type="PIR" id="H84458">
    <property type="entry name" value="H84458"/>
</dbReference>
<dbReference type="RefSeq" id="NP_178535.3">
    <property type="nucleotide sequence ID" value="NM_126487.4"/>
</dbReference>
<dbReference type="SMR" id="F4IF99"/>
<dbReference type="FunCoup" id="F4IF99">
    <property type="interactions" value="29"/>
</dbReference>
<dbReference type="STRING" id="3702.F4IF99"/>
<dbReference type="CAZy" id="GT19">
    <property type="family name" value="Glycosyltransferase Family 19"/>
</dbReference>
<dbReference type="iPTMnet" id="F4IF99"/>
<dbReference type="PaxDb" id="3702-AT2G04560.1"/>
<dbReference type="ProteomicsDB" id="238590"/>
<dbReference type="EnsemblPlants" id="AT2G04560.1">
    <property type="protein sequence ID" value="AT2G04560.1"/>
    <property type="gene ID" value="AT2G04560"/>
</dbReference>
<dbReference type="GeneID" id="814998"/>
<dbReference type="Gramene" id="AT2G04560.1">
    <property type="protein sequence ID" value="AT2G04560.1"/>
    <property type="gene ID" value="AT2G04560"/>
</dbReference>
<dbReference type="KEGG" id="ath:AT2G04560"/>
<dbReference type="Araport" id="AT2G04560"/>
<dbReference type="TAIR" id="AT2G04560">
    <property type="gene designation" value="LPXB"/>
</dbReference>
<dbReference type="eggNOG" id="ENOG502QTT8">
    <property type="taxonomic scope" value="Eukaryota"/>
</dbReference>
<dbReference type="HOGENOM" id="CLU_036577_2_0_1"/>
<dbReference type="InParanoid" id="F4IF99"/>
<dbReference type="OMA" id="YVILPFE"/>
<dbReference type="OrthoDB" id="2419at2759"/>
<dbReference type="BRENDA" id="2.4.1.182">
    <property type="organism ID" value="399"/>
</dbReference>
<dbReference type="UniPathway" id="UPA00359">
    <property type="reaction ID" value="UER00481"/>
</dbReference>
<dbReference type="PRO" id="PR:F4IF99"/>
<dbReference type="Proteomes" id="UP000006548">
    <property type="component" value="Chromosome 2"/>
</dbReference>
<dbReference type="ExpressionAtlas" id="F4IF99">
    <property type="expression patterns" value="baseline and differential"/>
</dbReference>
<dbReference type="GO" id="GO:0016020">
    <property type="term" value="C:membrane"/>
    <property type="evidence" value="ECO:0007669"/>
    <property type="project" value="GOC"/>
</dbReference>
<dbReference type="GO" id="GO:0005739">
    <property type="term" value="C:mitochondrion"/>
    <property type="evidence" value="ECO:0000314"/>
    <property type="project" value="TAIR"/>
</dbReference>
<dbReference type="GO" id="GO:0008915">
    <property type="term" value="F:lipid-A-disaccharide synthase activity"/>
    <property type="evidence" value="ECO:0000315"/>
    <property type="project" value="UniProtKB"/>
</dbReference>
<dbReference type="GO" id="GO:0009245">
    <property type="term" value="P:lipid A biosynthetic process"/>
    <property type="evidence" value="ECO:0007669"/>
    <property type="project" value="UniProtKB-KW"/>
</dbReference>
<dbReference type="GO" id="GO:2001289">
    <property type="term" value="P:lipid X metabolic process"/>
    <property type="evidence" value="ECO:0000315"/>
    <property type="project" value="UniProtKB"/>
</dbReference>
<dbReference type="InterPro" id="IPR003835">
    <property type="entry name" value="Glyco_trans_19"/>
</dbReference>
<dbReference type="PANTHER" id="PTHR30372">
    <property type="entry name" value="LIPID-A-DISACCHARIDE SYNTHASE"/>
    <property type="match status" value="1"/>
</dbReference>
<dbReference type="PANTHER" id="PTHR30372:SF4">
    <property type="entry name" value="LIPID-A-DISACCHARIDE SYNTHASE, MITOCHONDRIAL-RELATED"/>
    <property type="match status" value="1"/>
</dbReference>
<dbReference type="Pfam" id="PF02684">
    <property type="entry name" value="LpxB"/>
    <property type="match status" value="1"/>
</dbReference>
<dbReference type="SUPFAM" id="SSF53756">
    <property type="entry name" value="UDP-Glycosyltransferase/glycogen phosphorylase"/>
    <property type="match status" value="1"/>
</dbReference>
<name>LPXB_ARATH</name>
<evidence type="ECO:0000255" key="1"/>
<evidence type="ECO:0000269" key="2">
    <source>
    </source>
</evidence>
<evidence type="ECO:0000305" key="3"/>
<reference key="1">
    <citation type="journal article" date="1999" name="Nature">
        <title>Sequence and analysis of chromosome 2 of the plant Arabidopsis thaliana.</title>
        <authorList>
            <person name="Lin X."/>
            <person name="Kaul S."/>
            <person name="Rounsley S.D."/>
            <person name="Shea T.P."/>
            <person name="Benito M.-I."/>
            <person name="Town C.D."/>
            <person name="Fujii C.Y."/>
            <person name="Mason T.M."/>
            <person name="Bowman C.L."/>
            <person name="Barnstead M.E."/>
            <person name="Feldblyum T.V."/>
            <person name="Buell C.R."/>
            <person name="Ketchum K.A."/>
            <person name="Lee J.J."/>
            <person name="Ronning C.M."/>
            <person name="Koo H.L."/>
            <person name="Moffat K.S."/>
            <person name="Cronin L.A."/>
            <person name="Shen M."/>
            <person name="Pai G."/>
            <person name="Van Aken S."/>
            <person name="Umayam L."/>
            <person name="Tallon L.J."/>
            <person name="Gill J.E."/>
            <person name="Adams M.D."/>
            <person name="Carrera A.J."/>
            <person name="Creasy T.H."/>
            <person name="Goodman H.M."/>
            <person name="Somerville C.R."/>
            <person name="Copenhaver G.P."/>
            <person name="Preuss D."/>
            <person name="Nierman W.C."/>
            <person name="White O."/>
            <person name="Eisen J.A."/>
            <person name="Salzberg S.L."/>
            <person name="Fraser C.M."/>
            <person name="Venter J.C."/>
        </authorList>
    </citation>
    <scope>NUCLEOTIDE SEQUENCE [LARGE SCALE GENOMIC DNA]</scope>
    <source>
        <strain>cv. Columbia</strain>
    </source>
</reference>
<reference key="2">
    <citation type="journal article" date="2017" name="Plant J.">
        <title>Araport11: a complete reannotation of the Arabidopsis thaliana reference genome.</title>
        <authorList>
            <person name="Cheng C.Y."/>
            <person name="Krishnakumar V."/>
            <person name="Chan A.P."/>
            <person name="Thibaud-Nissen F."/>
            <person name="Schobel S."/>
            <person name="Town C.D."/>
        </authorList>
    </citation>
    <scope>GENOME REANNOTATION</scope>
    <source>
        <strain>cv. Columbia</strain>
    </source>
</reference>
<reference key="3">
    <citation type="submission" date="2005-05" db="EMBL/GenBank/DDBJ databases">
        <title>Arabidopsis cDNA clones.</title>
        <authorList>
            <person name="Shinn P."/>
            <person name="Chen H."/>
            <person name="Cheuk R.F."/>
            <person name="Kim C.J."/>
            <person name="Ecker J.R."/>
        </authorList>
    </citation>
    <scope>NUCLEOTIDE SEQUENCE [LARGE SCALE MRNA]</scope>
    <source>
        <strain>cv. Columbia</strain>
    </source>
</reference>
<reference key="4">
    <citation type="journal article" date="2011" name="Proc. Natl. Acad. Sci. U.S.A.">
        <title>Pathway for lipid A biosynthesis in Arabidopsis thaliana resembling that of Escherichia coli.</title>
        <authorList>
            <person name="Li C."/>
            <person name="Guan Z."/>
            <person name="Liu D."/>
            <person name="Raetz C.R."/>
        </authorList>
    </citation>
    <scope>PATHWAY</scope>
    <scope>SUBCELLULAR LOCATION</scope>
    <scope>GENE FAMILY</scope>
    <scope>NOMENCLATURE</scope>
    <scope>DISRUPTION PHENOTYPE</scope>
</reference>
<feature type="transit peptide" description="Mitochondrion" evidence="1">
    <location>
        <begin position="1"/>
        <end position="58"/>
    </location>
</feature>
<feature type="chain" id="PRO_0000421460" description="Probable lipid-A-disaccharide synthase, mitochondrial">
    <location>
        <begin position="59"/>
        <end position="460"/>
    </location>
</feature>
<accession>F4IF99</accession>
<accession>Q500V1</accession>
<accession>Q9SJB5</accession>
<proteinExistence type="evidence at transcript level"/>
<keyword id="KW-0328">Glycosyltransferase</keyword>
<keyword id="KW-0441">Lipid A biosynthesis</keyword>
<keyword id="KW-0444">Lipid biosynthesis</keyword>
<keyword id="KW-0443">Lipid metabolism</keyword>
<keyword id="KW-0496">Mitochondrion</keyword>
<keyword id="KW-1185">Reference proteome</keyword>
<keyword id="KW-0808">Transferase</keyword>
<keyword id="KW-0809">Transit peptide</keyword>
<protein>
    <recommendedName>
        <fullName>Probable lipid-A-disaccharide synthase, mitochondrial</fullName>
        <ecNumber>2.4.1.182</ecNumber>
    </recommendedName>
    <alternativeName>
        <fullName>Protein LIPID X B</fullName>
        <shortName>AtLpxB</shortName>
    </alternativeName>
</protein>
<organism>
    <name type="scientific">Arabidopsis thaliana</name>
    <name type="common">Mouse-ear cress</name>
    <dbReference type="NCBI Taxonomy" id="3702"/>
    <lineage>
        <taxon>Eukaryota</taxon>
        <taxon>Viridiplantae</taxon>
        <taxon>Streptophyta</taxon>
        <taxon>Embryophyta</taxon>
        <taxon>Tracheophyta</taxon>
        <taxon>Spermatophyta</taxon>
        <taxon>Magnoliopsida</taxon>
        <taxon>eudicotyledons</taxon>
        <taxon>Gunneridae</taxon>
        <taxon>Pentapetalae</taxon>
        <taxon>rosids</taxon>
        <taxon>malvids</taxon>
        <taxon>Brassicales</taxon>
        <taxon>Brassicaceae</taxon>
        <taxon>Camelineae</taxon>
        <taxon>Arabidopsis</taxon>
    </lineage>
</organism>
<comment type="function">
    <text evidence="3">Condensation of UDP-2,3-diacylglucosamine and 2,3-diacylglucosamine-1-phosphate to form lipid A disaccharide, a precursor of lipid A, a phosphorylated glycolipid that in bacteria anchors the lipopolysaccharide to the outer membrane of the cell. Lipid A-like molecules in plants may serve as structural components of the outer membranes of mitochondria and/or chloroplasts, or may be involved in signal transduction or plant defense responses (Potential).</text>
</comment>
<comment type="catalytic activity">
    <reaction>
        <text>a lipid X + a UDP-2-N,3-O-bis[(3R)-3-hydroxyacyl]-alpha-D-glucosamine = a lipid A disaccharide + UDP + H(+)</text>
        <dbReference type="Rhea" id="RHEA:67828"/>
        <dbReference type="ChEBI" id="CHEBI:15378"/>
        <dbReference type="ChEBI" id="CHEBI:58223"/>
        <dbReference type="ChEBI" id="CHEBI:137748"/>
        <dbReference type="ChEBI" id="CHEBI:176338"/>
        <dbReference type="ChEBI" id="CHEBI:176343"/>
        <dbReference type="EC" id="2.4.1.182"/>
    </reaction>
</comment>
<comment type="pathway">
    <text evidence="2">Glycolipid biosynthesis; lipid IV(A) biosynthesis; lipid IV(A) from (3R)-3-hydroxytetradecanoyl-[acyl-carrier-protein] and UDP-N-acetyl-alpha-D-glucosamine: step 5/6.</text>
</comment>
<comment type="subcellular location">
    <subcellularLocation>
        <location evidence="2">Mitochondrion</location>
    </subcellularLocation>
</comment>
<comment type="disruption phenotype">
    <text evidence="2">No visible phenotype under normal growth conditions, but plants lacking LPXB accumulate high levels of 2,3-diacylglucosamine-1-phosphate and UDP-2,3-diacylglucosamine.</text>
</comment>
<comment type="similarity">
    <text evidence="3">Belongs to the LpxB family.</text>
</comment>
<comment type="sequence caution" evidence="3">
    <conflict type="erroneous gene model prediction">
        <sequence resource="EMBL-CDS" id="AAD25824"/>
    </conflict>
</comment>
<comment type="sequence caution" evidence="3">
    <conflict type="frameshift">
        <sequence resource="EMBL-CDS" id="AAY34177"/>
    </conflict>
</comment>
<gene>
    <name type="primary">LPXB</name>
    <name type="ordered locus">At2g04560</name>
    <name type="ORF">T1O3.3</name>
</gene>
<sequence length="460" mass="51465">MMFQITKSKLRFPLSTFTKRYSSFQAAKSVIDKAAIDGELRVFIVSGEVSGDNIGSRLMSSLKKLSPLPIRFNGVGGSLMCKKGLNSLFPMEDLAVMGVWELLPHLYKFRVKLKETIDAAVKFKPHVVVTVDSKGFSFRLLKELRARYKQQRLENCSVHFHYVAPSFWAWKGGESRLGGLSEFVDHLFCILPNEERVCREHGVEATFVGHPVLEDASEFDLVRRCKPQELKLEGLSFSEHSIPSDSTVISVLPGSRLQEVERMLPIFSKAMKLLKDPFPKLVTLIHVASNNQVDHYIGESFSEWPVPAILVPSGSTQLKYDAFGASQAALCTSGTVAVELQLAHLPSLVAYRAHFLTELLIRYKAKIPYISLPNILLDSPIIPEALFQACNPSNLASILERLLLDEKMRERQVVGAEKLIQLLHPSESRMGNSIHCTGLESHRYTPSILAASTILSYARR</sequence>